<reference key="1">
    <citation type="journal article" date="2001" name="J. Muscle Res. Cell Motil.">
        <title>Human myosin XVBP is a transcribed pseudogene.</title>
        <authorList>
            <person name="Boger E.T."/>
            <person name="Sellers J.R."/>
            <person name="Friedman T.B."/>
        </authorList>
    </citation>
    <scope>NUCLEOTIDE SEQUENCE [MRNA] (ISOFORM 2)</scope>
    <scope>VARIANT TRP-1606</scope>
    <source>
        <tissue>Kidney</tissue>
        <tissue>Stomach</tissue>
    </source>
</reference>
<reference key="2">
    <citation type="journal article" date="2006" name="Nature">
        <title>DNA sequence of human chromosome 17 and analysis of rearrangement in the human lineage.</title>
        <authorList>
            <person name="Zody M.C."/>
            <person name="Garber M."/>
            <person name="Adams D.J."/>
            <person name="Sharpe T."/>
            <person name="Harrow J."/>
            <person name="Lupski J.R."/>
            <person name="Nicholson C."/>
            <person name="Searle S.M."/>
            <person name="Wilming L."/>
            <person name="Young S.K."/>
            <person name="Abouelleil A."/>
            <person name="Allen N.R."/>
            <person name="Bi W."/>
            <person name="Bloom T."/>
            <person name="Borowsky M.L."/>
            <person name="Bugalter B.E."/>
            <person name="Butler J."/>
            <person name="Chang J.L."/>
            <person name="Chen C.-K."/>
            <person name="Cook A."/>
            <person name="Corum B."/>
            <person name="Cuomo C.A."/>
            <person name="de Jong P.J."/>
            <person name="DeCaprio D."/>
            <person name="Dewar K."/>
            <person name="FitzGerald M."/>
            <person name="Gilbert J."/>
            <person name="Gibson R."/>
            <person name="Gnerre S."/>
            <person name="Goldstein S."/>
            <person name="Grafham D.V."/>
            <person name="Grocock R."/>
            <person name="Hafez N."/>
            <person name="Hagopian D.S."/>
            <person name="Hart E."/>
            <person name="Norman C.H."/>
            <person name="Humphray S."/>
            <person name="Jaffe D.B."/>
            <person name="Jones M."/>
            <person name="Kamal M."/>
            <person name="Khodiyar V.K."/>
            <person name="LaButti K."/>
            <person name="Laird G."/>
            <person name="Lehoczky J."/>
            <person name="Liu X."/>
            <person name="Lokyitsang T."/>
            <person name="Loveland J."/>
            <person name="Lui A."/>
            <person name="Macdonald P."/>
            <person name="Major J.E."/>
            <person name="Matthews L."/>
            <person name="Mauceli E."/>
            <person name="McCarroll S.A."/>
            <person name="Mihalev A.H."/>
            <person name="Mudge J."/>
            <person name="Nguyen C."/>
            <person name="Nicol R."/>
            <person name="O'Leary S.B."/>
            <person name="Osoegawa K."/>
            <person name="Schwartz D.C."/>
            <person name="Shaw-Smith C."/>
            <person name="Stankiewicz P."/>
            <person name="Steward C."/>
            <person name="Swarbreck D."/>
            <person name="Venkataraman V."/>
            <person name="Whittaker C.A."/>
            <person name="Yang X."/>
            <person name="Zimmer A.R."/>
            <person name="Bradley A."/>
            <person name="Hubbard T."/>
            <person name="Birren B.W."/>
            <person name="Rogers J."/>
            <person name="Lander E.S."/>
            <person name="Nusbaum C."/>
        </authorList>
    </citation>
    <scope>NUCLEOTIDE SEQUENCE [LARGE SCALE GENOMIC DNA]</scope>
</reference>
<reference key="3">
    <citation type="journal article" date="2001" name="DNA Res.">
        <title>Prediction of the coding sequences of unidentified human genes. XX. The complete sequences of 100 new cDNA clones from brain which code for large proteins in vitro.</title>
        <authorList>
            <person name="Nagase T."/>
            <person name="Nakayama M."/>
            <person name="Nakajima D."/>
            <person name="Kikuno R."/>
            <person name="Ohara O."/>
        </authorList>
    </citation>
    <scope>NUCLEOTIDE SEQUENCE [LARGE SCALE MRNA] OF 1174-2575</scope>
    <scope>VARIANT TRP-1606</scope>
    <source>
        <tissue>Brain</tissue>
    </source>
</reference>
<reference key="4">
    <citation type="journal article" date="2001" name="Mol. Biol. Cell">
        <title>A millennial myosin census.</title>
        <authorList>
            <person name="Berg J.S."/>
            <person name="Powell B.C."/>
            <person name="Cheney R.E."/>
        </authorList>
    </citation>
    <scope>IDENTIFICATION</scope>
</reference>
<reference key="5">
    <citation type="submission" date="2006-10" db="PDB data bank">
        <title>Solution structure of the SH3 domain of human KIAA1783 protein.</title>
        <authorList>
            <consortium name="RIKEN structural genomics initiative (RSGI)"/>
        </authorList>
    </citation>
    <scope>STRUCTURE BY NMR OF 2483-2554</scope>
</reference>
<protein>
    <recommendedName>
        <fullName evidence="7">Unconventional myosin-XVB</fullName>
    </recommendedName>
    <alternativeName>
        <fullName>Myosin XVBP</fullName>
    </alternativeName>
    <alternativeName>
        <fullName>Unconventional myosin-15B</fullName>
    </alternativeName>
</protein>
<keyword id="KW-0002">3D-structure</keyword>
<keyword id="KW-0009">Actin-binding</keyword>
<keyword id="KW-0025">Alternative splicing</keyword>
<keyword id="KW-0067">ATP-binding</keyword>
<keyword id="KW-0963">Cytoplasm</keyword>
<keyword id="KW-0505">Motor protein</keyword>
<keyword id="KW-0518">Myosin</keyword>
<keyword id="KW-0547">Nucleotide-binding</keyword>
<keyword id="KW-1267">Proteomics identification</keyword>
<keyword id="KW-1185">Reference proteome</keyword>
<keyword id="KW-0677">Repeat</keyword>
<keyword id="KW-0728">SH3 domain</keyword>
<feature type="chain" id="PRO_0000292047" description="Unconventional myosin-XVB">
    <location>
        <begin position="1"/>
        <end position="3096"/>
    </location>
</feature>
<feature type="domain" description="Myosin motor" evidence="5">
    <location>
        <begin position="720"/>
        <end position="1394"/>
    </location>
</feature>
<feature type="domain" description="IQ" evidence="2">
    <location>
        <begin position="1414"/>
        <end position="1443"/>
    </location>
</feature>
<feature type="domain" description="MyTH4 1" evidence="4">
    <location>
        <begin position="1551"/>
        <end position="1702"/>
    </location>
</feature>
<feature type="domain" description="SH3" evidence="3">
    <location>
        <begin position="2481"/>
        <end position="2542"/>
    </location>
</feature>
<feature type="domain" description="MyTH4 2" evidence="4">
    <location>
        <begin position="2643"/>
        <end position="2789"/>
    </location>
</feature>
<feature type="domain" description="FERM" evidence="1">
    <location>
        <begin position="2795"/>
        <end position="3096"/>
    </location>
</feature>
<feature type="region of interest" description="Disordered" evidence="6">
    <location>
        <begin position="1"/>
        <end position="330"/>
    </location>
</feature>
<feature type="region of interest" description="Disordered" evidence="6">
    <location>
        <begin position="389"/>
        <end position="489"/>
    </location>
</feature>
<feature type="region of interest" description="Disordered" evidence="6">
    <location>
        <begin position="508"/>
        <end position="540"/>
    </location>
</feature>
<feature type="region of interest" description="Disordered" evidence="6">
    <location>
        <begin position="553"/>
        <end position="649"/>
    </location>
</feature>
<feature type="region of interest" description="Actin-binding" evidence="5">
    <location>
        <begin position="1273"/>
        <end position="1295"/>
    </location>
</feature>
<feature type="region of interest" description="Disordered" evidence="6">
    <location>
        <begin position="1802"/>
        <end position="1833"/>
    </location>
</feature>
<feature type="region of interest" description="Disordered" evidence="6">
    <location>
        <begin position="1963"/>
        <end position="2026"/>
    </location>
</feature>
<feature type="region of interest" description="Disordered" evidence="6">
    <location>
        <begin position="2040"/>
        <end position="2262"/>
    </location>
</feature>
<feature type="region of interest" description="Disordered" evidence="6">
    <location>
        <begin position="2548"/>
        <end position="2567"/>
    </location>
</feature>
<feature type="compositionally biased region" description="Low complexity" evidence="6">
    <location>
        <begin position="19"/>
        <end position="33"/>
    </location>
</feature>
<feature type="compositionally biased region" description="Basic and acidic residues" evidence="6">
    <location>
        <begin position="34"/>
        <end position="50"/>
    </location>
</feature>
<feature type="compositionally biased region" description="Basic residues" evidence="6">
    <location>
        <begin position="124"/>
        <end position="143"/>
    </location>
</feature>
<feature type="compositionally biased region" description="Basic and acidic residues" evidence="6">
    <location>
        <begin position="212"/>
        <end position="222"/>
    </location>
</feature>
<feature type="compositionally biased region" description="Basic and acidic residues" evidence="6">
    <location>
        <begin position="261"/>
        <end position="288"/>
    </location>
</feature>
<feature type="compositionally biased region" description="Low complexity" evidence="6">
    <location>
        <begin position="307"/>
        <end position="330"/>
    </location>
</feature>
<feature type="compositionally biased region" description="Basic and acidic residues" evidence="6">
    <location>
        <begin position="406"/>
        <end position="416"/>
    </location>
</feature>
<feature type="compositionally biased region" description="Basic residues" evidence="6">
    <location>
        <begin position="417"/>
        <end position="426"/>
    </location>
</feature>
<feature type="compositionally biased region" description="Basic and acidic residues" evidence="6">
    <location>
        <begin position="427"/>
        <end position="489"/>
    </location>
</feature>
<feature type="compositionally biased region" description="Pro residues" evidence="6">
    <location>
        <begin position="1808"/>
        <end position="1820"/>
    </location>
</feature>
<feature type="compositionally biased region" description="Low complexity" evidence="6">
    <location>
        <begin position="1963"/>
        <end position="1980"/>
    </location>
</feature>
<feature type="compositionally biased region" description="Acidic residues" evidence="6">
    <location>
        <begin position="2059"/>
        <end position="2076"/>
    </location>
</feature>
<feature type="compositionally biased region" description="Basic and acidic residues" evidence="6">
    <location>
        <begin position="2102"/>
        <end position="2116"/>
    </location>
</feature>
<feature type="compositionally biased region" description="Pro residues" evidence="6">
    <location>
        <begin position="2159"/>
        <end position="2170"/>
    </location>
</feature>
<feature type="compositionally biased region" description="Basic and acidic residues" evidence="6">
    <location>
        <begin position="2176"/>
        <end position="2185"/>
    </location>
</feature>
<feature type="compositionally biased region" description="Pro residues" evidence="6">
    <location>
        <begin position="2199"/>
        <end position="2217"/>
    </location>
</feature>
<feature type="compositionally biased region" description="Pro residues" evidence="6">
    <location>
        <begin position="2247"/>
        <end position="2261"/>
    </location>
</feature>
<feature type="binding site" evidence="5">
    <location>
        <begin position="818"/>
        <end position="825"/>
    </location>
    <ligand>
        <name>ATP</name>
        <dbReference type="ChEBI" id="CHEBI:30616"/>
    </ligand>
</feature>
<feature type="splice variant" id="VSP_062068" description="In isoform 2.">
    <original>VCDSSVLLCLKKRFHLGRIYTFGGPVLLVL</original>
    <variation>AGAVPKLPSPAHSSSYPPCPHLYELRVDPY</variation>
    <location>
        <begin position="731"/>
        <end position="760"/>
    </location>
</feature>
<feature type="splice variant" id="VSP_062069" description="In isoform 2.">
    <location>
        <begin position="761"/>
        <end position="3096"/>
    </location>
</feature>
<feature type="sequence variant" id="VAR_080141" description="In dbSNP:rs3803728.">
    <original>R</original>
    <variation>W</variation>
    <location>
        <position position="1606"/>
    </location>
</feature>
<feature type="sequence conflict" description="In Ref. 1; AF418286/AF418287/AF418288/AF418289/AF418290/AF418291." evidence="7" ref="1">
    <original>D</original>
    <variation>A</variation>
    <location>
        <position position="46"/>
    </location>
</feature>
<feature type="sequence conflict" description="In Ref. 1; AF418286." evidence="7" ref="1">
    <original>Q</original>
    <variation>R</variation>
    <location>
        <position position="521"/>
    </location>
</feature>
<feature type="sequence conflict" description="In Ref. 1; AF418287." evidence="7" ref="1">
    <original>S</original>
    <variation>A</variation>
    <location>
        <position position="597"/>
    </location>
</feature>
<feature type="sequence conflict" description="In Ref. 1; AF418288." evidence="7" ref="1">
    <original>E</original>
    <variation>G</variation>
    <location>
        <position position="625"/>
    </location>
</feature>
<feature type="sequence conflict" description="In Ref. 1; AF418291." evidence="7" ref="1">
    <original>E</original>
    <variation>G</variation>
    <location>
        <position position="645"/>
    </location>
</feature>
<feature type="sequence conflict" description="In Ref. 1; AF418289." evidence="7" ref="1">
    <original>R</original>
    <variation>W</variation>
    <location>
        <position position="713"/>
    </location>
</feature>
<feature type="sequence conflict" description="In Ref. 1; AF418291." evidence="7" ref="1">
    <original>A</original>
    <variation>P</variation>
    <location>
        <position position="726"/>
    </location>
</feature>
<feature type="strand" evidence="9">
    <location>
        <begin position="2485"/>
        <end position="2490"/>
    </location>
</feature>
<feature type="strand" evidence="9">
    <location>
        <begin position="2495"/>
        <end position="2499"/>
    </location>
</feature>
<feature type="strand" evidence="9">
    <location>
        <begin position="2507"/>
        <end position="2510"/>
    </location>
</feature>
<feature type="strand" evidence="9">
    <location>
        <begin position="2520"/>
        <end position="2527"/>
    </location>
</feature>
<feature type="strand" evidence="9">
    <location>
        <begin position="2529"/>
        <end position="2533"/>
    </location>
</feature>
<feature type="strand" evidence="9">
    <location>
        <begin position="2536"/>
        <end position="2539"/>
    </location>
</feature>
<comment type="interaction">
    <interactant intactId="EBI-7950783">
        <id>Q96JP2</id>
    </interactant>
    <interactant intactId="EBI-11096309">
        <id>Q9NYB9-2</id>
        <label>ABI2</label>
    </interactant>
    <organismsDiffer>false</organismsDiffer>
    <experiments>3</experiments>
</comment>
<comment type="interaction">
    <interactant intactId="EBI-7950783">
        <id>Q96JP2</id>
    </interactant>
    <interactant intactId="EBI-10173507">
        <id>Q6UY14-3</id>
        <label>ADAMTSL4</label>
    </interactant>
    <organismsDiffer>false</organismsDiffer>
    <experiments>3</experiments>
</comment>
<comment type="interaction">
    <interactant intactId="EBI-7950783">
        <id>Q96JP2</id>
    </interactant>
    <interactant intactId="EBI-11530605">
        <id>Q9H257-2</id>
        <label>CARD9</label>
    </interactant>
    <organismsDiffer>false</organismsDiffer>
    <experiments>3</experiments>
</comment>
<comment type="interaction">
    <interactant intactId="EBI-7950783">
        <id>Q96JP2</id>
    </interactant>
    <interactant intactId="EBI-395261">
        <id>P24863</id>
        <label>CCNC</label>
    </interactant>
    <organismsDiffer>false</organismsDiffer>
    <experiments>3</experiments>
</comment>
<comment type="interaction">
    <interactant intactId="EBI-7950783">
        <id>Q96JP2</id>
    </interactant>
    <interactant intactId="EBI-718615">
        <id>Q9H5F2</id>
        <label>CFAP68</label>
    </interactant>
    <organismsDiffer>false</organismsDiffer>
    <experiments>3</experiments>
</comment>
<comment type="interaction">
    <interactant intactId="EBI-7950783">
        <id>Q96JP2</id>
    </interactant>
    <interactant intactId="EBI-945751">
        <id>P38432</id>
        <label>COIL</label>
    </interactant>
    <organismsDiffer>false</organismsDiffer>
    <experiments>3</experiments>
</comment>
<comment type="interaction">
    <interactant intactId="EBI-7950783">
        <id>Q96JP2</id>
    </interactant>
    <interactant intactId="EBI-748171">
        <id>O43186</id>
        <label>CRX</label>
    </interactant>
    <organismsDiffer>false</organismsDiffer>
    <experiments>3</experiments>
</comment>
<comment type="interaction">
    <interactant intactId="EBI-7950783">
        <id>Q96JP2</id>
    </interactant>
    <interactant intactId="EBI-7357329">
        <id>Q9H596</id>
        <label>DUSP21</label>
    </interactant>
    <organismsDiffer>false</organismsDiffer>
    <experiments>3</experiments>
</comment>
<comment type="interaction">
    <interactant intactId="EBI-7950783">
        <id>Q96JP2</id>
    </interactant>
    <interactant intactId="EBI-13351543">
        <id>Q7Z444</id>
        <label>ERAS</label>
    </interactant>
    <organismsDiffer>false</organismsDiffer>
    <experiments>3</experiments>
</comment>
<comment type="interaction">
    <interactant intactId="EBI-7950783">
        <id>Q96JP2</id>
    </interactant>
    <interactant intactId="EBI-701903">
        <id>Q14192</id>
        <label>FHL2</label>
    </interactant>
    <organismsDiffer>false</organismsDiffer>
    <experiments>5</experiments>
</comment>
<comment type="interaction">
    <interactant intactId="EBI-7950783">
        <id>Q96JP2</id>
    </interactant>
    <interactant intactId="EBI-975200">
        <id>Q9UQC2</id>
        <label>GAB2</label>
    </interactant>
    <organismsDiffer>false</organismsDiffer>
    <experiments>3</experiments>
</comment>
<comment type="interaction">
    <interactant intactId="EBI-7950783">
        <id>Q96JP2</id>
    </interactant>
    <interactant intactId="EBI-372506">
        <id>Q8TAE8</id>
        <label>GADD45GIP1</label>
    </interactant>
    <organismsDiffer>false</organismsDiffer>
    <experiments>3</experiments>
</comment>
<comment type="interaction">
    <interactant intactId="EBI-7950783">
        <id>Q96JP2</id>
    </interactant>
    <interactant intactId="EBI-2857315">
        <id>Q9BRX5</id>
        <label>GINS3</label>
    </interactant>
    <organismsDiffer>false</organismsDiffer>
    <experiments>3</experiments>
</comment>
<comment type="interaction">
    <interactant intactId="EBI-7950783">
        <id>Q96JP2</id>
    </interactant>
    <interactant intactId="EBI-11519926">
        <id>Q6PI77</id>
        <label>GPRASP3</label>
    </interactant>
    <organismsDiffer>false</organismsDiffer>
    <experiments>3</experiments>
</comment>
<comment type="interaction">
    <interactant intactId="EBI-7950783">
        <id>Q96JP2</id>
    </interactant>
    <interactant intactId="EBI-740785">
        <id>P49639</id>
        <label>HOXA1</label>
    </interactant>
    <organismsDiffer>false</organismsDiffer>
    <experiments>3</experiments>
</comment>
<comment type="interaction">
    <interactant intactId="EBI-7950783">
        <id>Q96JP2</id>
    </interactant>
    <interactant intactId="EBI-8638439">
        <id>Q8IYA8</id>
        <label>IHO1</label>
    </interactant>
    <organismsDiffer>false</organismsDiffer>
    <experiments>3</experiments>
</comment>
<comment type="interaction">
    <interactant intactId="EBI-7950783">
        <id>Q96JP2</id>
    </interactant>
    <interactant intactId="EBI-747204">
        <id>Q9UKT9</id>
        <label>IKZF3</label>
    </interactant>
    <organismsDiffer>false</organismsDiffer>
    <experiments>3</experiments>
</comment>
<comment type="interaction">
    <interactant intactId="EBI-7950783">
        <id>Q96JP2</id>
    </interactant>
    <interactant intactId="EBI-715394">
        <id>Q9H079</id>
        <label>KATNBL1</label>
    </interactant>
    <organismsDiffer>false</organismsDiffer>
    <experiments>3</experiments>
</comment>
<comment type="interaction">
    <interactant intactId="EBI-7950783">
        <id>Q96JP2</id>
    </interactant>
    <interactant intactId="EBI-12017638">
        <id>P48051</id>
        <label>KCNJ6</label>
    </interactant>
    <organismsDiffer>false</organismsDiffer>
    <experiments>3</experiments>
</comment>
<comment type="interaction">
    <interactant intactId="EBI-7950783">
        <id>Q96JP2</id>
    </interactant>
    <interactant intactId="EBI-739493">
        <id>Q6ZU52</id>
        <label>KIAA0408</label>
    </interactant>
    <organismsDiffer>false</organismsDiffer>
    <experiments>3</experiments>
</comment>
<comment type="interaction">
    <interactant intactId="EBI-7950783">
        <id>Q96JP2</id>
    </interactant>
    <interactant intactId="EBI-10213781">
        <id>Q5T7B8-2</id>
        <label>KIF24</label>
    </interactant>
    <organismsDiffer>false</organismsDiffer>
    <experiments>3</experiments>
</comment>
<comment type="interaction">
    <interactant intactId="EBI-7950783">
        <id>Q96JP2</id>
    </interactant>
    <interactant intactId="EBI-14069005">
        <id>Q9BVG8-5</id>
        <label>KIFC3</label>
    </interactant>
    <organismsDiffer>false</organismsDiffer>
    <experiments>3</experiments>
</comment>
<comment type="interaction">
    <interactant intactId="EBI-7950783">
        <id>Q96JP2</id>
    </interactant>
    <interactant intactId="EBI-7232405">
        <id>O43474</id>
        <label>KLF4</label>
    </interactant>
    <organismsDiffer>false</organismsDiffer>
    <experiments>3</experiments>
</comment>
<comment type="interaction">
    <interactant intactId="EBI-7950783">
        <id>Q96JP2</id>
    </interactant>
    <interactant intactId="EBI-740929">
        <id>Q53G59</id>
        <label>KLHL12</label>
    </interactant>
    <organismsDiffer>false</organismsDiffer>
    <experiments>3</experiments>
</comment>
<comment type="interaction">
    <interactant intactId="EBI-7950783">
        <id>Q96JP2</id>
    </interactant>
    <interactant intactId="EBI-1223876">
        <id>P13646</id>
        <label>KRT13</label>
    </interactant>
    <organismsDiffer>false</organismsDiffer>
    <experiments>3</experiments>
</comment>
<comment type="interaction">
    <interactant intactId="EBI-7950783">
        <id>Q96JP2</id>
    </interactant>
    <interactant intactId="EBI-1047093">
        <id>O76011</id>
        <label>KRT34</label>
    </interactant>
    <organismsDiffer>false</organismsDiffer>
    <experiments>3</experiments>
</comment>
<comment type="interaction">
    <interactant intactId="EBI-7950783">
        <id>Q96JP2</id>
    </interactant>
    <interactant intactId="EBI-1058674">
        <id>Q92764</id>
        <label>KRT35</label>
    </interactant>
    <organismsDiffer>false</organismsDiffer>
    <experiments>3</experiments>
</comment>
<comment type="interaction">
    <interactant intactId="EBI-7950783">
        <id>Q96JP2</id>
    </interactant>
    <interactant intactId="EBI-2949715">
        <id>O95678</id>
        <label>KRT75</label>
    </interactant>
    <organismsDiffer>false</organismsDiffer>
    <experiments>3</experiments>
</comment>
<comment type="interaction">
    <interactant intactId="EBI-7950783">
        <id>Q96JP2</id>
    </interactant>
    <interactant intactId="EBI-12864460">
        <id>P48059-3</id>
        <label>LIMS1</label>
    </interactant>
    <organismsDiffer>false</organismsDiffer>
    <experiments>3</experiments>
</comment>
<comment type="interaction">
    <interactant intactId="EBI-7950783">
        <id>Q96JP2</id>
    </interactant>
    <interactant intactId="EBI-11522433">
        <id>Q5JR59-3</id>
        <label>MTUS2</label>
    </interactant>
    <organismsDiffer>false</organismsDiffer>
    <experiments>3</experiments>
</comment>
<comment type="interaction">
    <interactant intactId="EBI-7950783">
        <id>Q96JP2</id>
    </interactant>
    <interactant intactId="EBI-5662487">
        <id>Q8TDC0</id>
        <label>MYOZ3</label>
    </interactant>
    <organismsDiffer>false</organismsDiffer>
    <experiments>3</experiments>
</comment>
<comment type="interaction">
    <interactant intactId="EBI-7950783">
        <id>Q96JP2</id>
    </interactant>
    <interactant intactId="EBI-748610">
        <id>Q6IA69</id>
        <label>NADSYN1</label>
    </interactant>
    <organismsDiffer>false</organismsDiffer>
    <experiments>6</experiments>
</comment>
<comment type="interaction">
    <interactant intactId="EBI-7950783">
        <id>Q96JP2</id>
    </interactant>
    <interactant intactId="EBI-1246332">
        <id>Q9UI09</id>
        <label>NDUFA12</label>
    </interactant>
    <organismsDiffer>false</organismsDiffer>
    <experiments>3</experiments>
</comment>
<comment type="interaction">
    <interactant intactId="EBI-7950783">
        <id>Q96JP2</id>
    </interactant>
    <interactant intactId="EBI-10172876">
        <id>Q7Z6G3-2</id>
        <label>NECAB2</label>
    </interactant>
    <organismsDiffer>false</organismsDiffer>
    <experiments>3</experiments>
</comment>
<comment type="interaction">
    <interactant intactId="EBI-7950783">
        <id>Q96JP2</id>
    </interactant>
    <interactant intactId="EBI-11980721">
        <id>P46934-3</id>
        <label>NEDD4</label>
    </interactant>
    <organismsDiffer>false</organismsDiffer>
    <experiments>3</experiments>
</comment>
<comment type="interaction">
    <interactant intactId="EBI-7950783">
        <id>Q96JP2</id>
    </interactant>
    <interactant intactId="EBI-475646">
        <id>P07196</id>
        <label>NEFL</label>
    </interactant>
    <organismsDiffer>false</organismsDiffer>
    <experiments>3</experiments>
</comment>
<comment type="interaction">
    <interactant intactId="EBI-7950783">
        <id>Q96JP2</id>
    </interactant>
    <interactant intactId="EBI-2859639">
        <id>Q5HYW2</id>
        <label>NHSL2</label>
    </interactant>
    <organismsDiffer>false</organismsDiffer>
    <experiments>3</experiments>
</comment>
<comment type="interaction">
    <interactant intactId="EBI-7950783">
        <id>Q96JP2</id>
    </interactant>
    <interactant intactId="EBI-3920396">
        <id>Q6ZUT1</id>
        <label>NKAPD1</label>
    </interactant>
    <organismsDiffer>false</organismsDiffer>
    <experiments>3</experiments>
</comment>
<comment type="interaction">
    <interactant intactId="EBI-7950783">
        <id>Q96JP2</id>
    </interactant>
    <interactant intactId="EBI-22310682">
        <id>P0DPK4</id>
        <label>NOTCH2NLC</label>
    </interactant>
    <organismsDiffer>false</organismsDiffer>
    <experiments>3</experiments>
</comment>
<comment type="interaction">
    <interactant intactId="EBI-7950783">
        <id>Q96JP2</id>
    </interactant>
    <interactant intactId="EBI-10250949">
        <id>Q6NSM0</id>
        <label>NR1D2</label>
    </interactant>
    <organismsDiffer>false</organismsDiffer>
    <experiments>3</experiments>
</comment>
<comment type="interaction">
    <interactant intactId="EBI-7950783">
        <id>Q96JP2</id>
    </interactant>
    <interactant intactId="EBI-347978">
        <id>P37198</id>
        <label>NUP62</label>
    </interactant>
    <organismsDiffer>false</organismsDiffer>
    <experiments>3</experiments>
</comment>
<comment type="interaction">
    <interactant intactId="EBI-7950783">
        <id>Q96JP2</id>
    </interactant>
    <interactant intactId="EBI-741896">
        <id>Q9P286</id>
        <label>PAK5</label>
    </interactant>
    <organismsDiffer>false</organismsDiffer>
    <experiments>3</experiments>
</comment>
<comment type="interaction">
    <interactant intactId="EBI-7950783">
        <id>Q96JP2</id>
    </interactant>
    <interactant intactId="EBI-2692890">
        <id>Q96KN3</id>
        <label>PKNOX2</label>
    </interactant>
    <organismsDiffer>false</organismsDiffer>
    <experiments>3</experiments>
</comment>
<comment type="interaction">
    <interactant intactId="EBI-7950783">
        <id>Q96JP2</id>
    </interactant>
    <interactant intactId="EBI-11079894">
        <id>Q9HB20</id>
        <label>PLEKHA3</label>
    </interactant>
    <organismsDiffer>false</organismsDiffer>
    <experiments>3</experiments>
</comment>
<comment type="interaction">
    <interactant intactId="EBI-7950783">
        <id>Q96JP2</id>
    </interactant>
    <interactant intactId="EBI-302345">
        <id>Q8ND90</id>
        <label>PNMA1</label>
    </interactant>
    <organismsDiffer>false</organismsDiffer>
    <experiments>3</experiments>
</comment>
<comment type="interaction">
    <interactant intactId="EBI-7950783">
        <id>Q96JP2</id>
    </interactant>
    <interactant intactId="EBI-12029004">
        <id>P78424</id>
        <label>POU6F2</label>
    </interactant>
    <organismsDiffer>false</organismsDiffer>
    <experiments>3</experiments>
</comment>
<comment type="interaction">
    <interactant intactId="EBI-7950783">
        <id>Q96JP2</id>
    </interactant>
    <interactant intactId="EBI-3923368">
        <id>Q8N3J5</id>
        <label>PPM1K</label>
    </interactant>
    <organismsDiffer>false</organismsDiffer>
    <experiments>3</experiments>
</comment>
<comment type="interaction">
    <interactant intactId="EBI-7950783">
        <id>Q96JP2</id>
    </interactant>
    <interactant intactId="EBI-2805516">
        <id>P31321</id>
        <label>PRKAR1B</label>
    </interactant>
    <organismsDiffer>false</organismsDiffer>
    <experiments>3</experiments>
</comment>
<comment type="interaction">
    <interactant intactId="EBI-7950783">
        <id>Q96JP2</id>
    </interactant>
    <interactant intactId="EBI-741332">
        <id>P57052</id>
        <label>RBM11</label>
    </interactant>
    <organismsDiffer>false</organismsDiffer>
    <experiments>3</experiments>
</comment>
<comment type="interaction">
    <interactant intactId="EBI-7950783">
        <id>Q96JP2</id>
    </interactant>
    <interactant intactId="EBI-948278">
        <id>Q15293</id>
        <label>RCN1</label>
    </interactant>
    <organismsDiffer>false</organismsDiffer>
    <experiments>3</experiments>
</comment>
<comment type="interaction">
    <interactant intactId="EBI-7950783">
        <id>Q96JP2</id>
    </interactant>
    <interactant intactId="EBI-746283">
        <id>Q96D15</id>
        <label>RCN3</label>
    </interactant>
    <organismsDiffer>false</organismsDiffer>
    <experiments>3</experiments>
</comment>
<comment type="interaction">
    <interactant intactId="EBI-7950783">
        <id>Q96JP2</id>
    </interactant>
    <interactant intactId="EBI-10829018">
        <id>Q04864-2</id>
        <label>REL</label>
    </interactant>
    <organismsDiffer>false</organismsDiffer>
    <experiments>3</experiments>
</comment>
<comment type="interaction">
    <interactant intactId="EBI-7950783">
        <id>Q96JP2</id>
    </interactant>
    <interactant intactId="EBI-2855824">
        <id>Q9UNE2</id>
        <label>RPH3AL</label>
    </interactant>
    <organismsDiffer>false</organismsDiffer>
    <experiments>3</experiments>
</comment>
<comment type="interaction">
    <interactant intactId="EBI-7950783">
        <id>Q96JP2</id>
    </interactant>
    <interactant intactId="EBI-12000762">
        <id>Q7Z5V6-2</id>
        <label>SAXO4</label>
    </interactant>
    <organismsDiffer>false</organismsDiffer>
    <experiments>3</experiments>
</comment>
<comment type="interaction">
    <interactant intactId="EBI-7950783">
        <id>Q96JP2</id>
    </interactant>
    <interactant intactId="EBI-17630587">
        <id>Q13239-3</id>
        <label>SLA</label>
    </interactant>
    <organismsDiffer>false</organismsDiffer>
    <experiments>3</experiments>
</comment>
<comment type="interaction">
    <interactant intactId="EBI-7950783">
        <id>Q96JP2</id>
    </interactant>
    <interactant intactId="EBI-741237">
        <id>O60504</id>
        <label>SORBS3</label>
    </interactant>
    <organismsDiffer>false</organismsDiffer>
    <experiments>3</experiments>
</comment>
<comment type="interaction">
    <interactant intactId="EBI-7950783">
        <id>Q96JP2</id>
    </interactant>
    <interactant intactId="EBI-11995806">
        <id>Q9H0A9-2</id>
        <label>SPATC1L</label>
    </interactant>
    <organismsDiffer>false</organismsDiffer>
    <experiments>3</experiments>
</comment>
<comment type="interaction">
    <interactant intactId="EBI-7950783">
        <id>Q96JP2</id>
    </interactant>
    <interactant intactId="EBI-7082156">
        <id>Q7Z698</id>
        <label>SPRED2</label>
    </interactant>
    <organismsDiffer>false</organismsDiffer>
    <experiments>3</experiments>
</comment>
<comment type="interaction">
    <interactant intactId="EBI-7950783">
        <id>Q96JP2</id>
    </interactant>
    <interactant intactId="EBI-744719">
        <id>Q9BWG4</id>
        <label>SSBP4</label>
    </interactant>
    <organismsDiffer>false</organismsDiffer>
    <experiments>3</experiments>
</comment>
<comment type="interaction">
    <interactant intactId="EBI-7950783">
        <id>Q96JP2</id>
    </interactant>
    <interactant intactId="EBI-11952764">
        <id>Q99081-3</id>
        <label>TCF12</label>
    </interactant>
    <organismsDiffer>false</organismsDiffer>
    <experiments>3</experiments>
</comment>
<comment type="interaction">
    <interactant intactId="EBI-7950783">
        <id>Q96JP2</id>
    </interactant>
    <interactant intactId="EBI-13636688">
        <id>P15884-3</id>
        <label>TCF4</label>
    </interactant>
    <organismsDiffer>false</organismsDiffer>
    <experiments>3</experiments>
</comment>
<comment type="interaction">
    <interactant intactId="EBI-7950783">
        <id>Q96JP2</id>
    </interactant>
    <interactant intactId="EBI-10301068">
        <id>Q9BXU3</id>
        <label>TEX13A</label>
    </interactant>
    <organismsDiffer>false</organismsDiffer>
    <experiments>3</experiments>
</comment>
<comment type="interaction">
    <interactant intactId="EBI-7950783">
        <id>Q96JP2</id>
    </interactant>
    <interactant intactId="EBI-1105213">
        <id>Q9UBB9</id>
        <label>TFIP11</label>
    </interactant>
    <organismsDiffer>false</organismsDiffer>
    <experiments>3</experiments>
</comment>
<comment type="interaction">
    <interactant intactId="EBI-7950783">
        <id>Q96JP2</id>
    </interactant>
    <interactant intactId="EBI-11978969">
        <id>Q4KMQ1-2</id>
        <label>TPRN</label>
    </interactant>
    <organismsDiffer>false</organismsDiffer>
    <experiments>3</experiments>
</comment>
<comment type="interaction">
    <interactant intactId="EBI-7950783">
        <id>Q96JP2</id>
    </interactant>
    <interactant intactId="EBI-355744">
        <id>Q12933</id>
        <label>TRAF2</label>
    </interactant>
    <organismsDiffer>false</organismsDiffer>
    <experiments>3</experiments>
</comment>
<comment type="interaction">
    <interactant intactId="EBI-7950783">
        <id>Q96JP2</id>
    </interactant>
    <interactant intactId="EBI-2820256">
        <id>Q14142</id>
        <label>TRIM14</label>
    </interactant>
    <organismsDiffer>false</organismsDiffer>
    <experiments>3</experiments>
</comment>
<comment type="interaction">
    <interactant intactId="EBI-7950783">
        <id>Q96JP2</id>
    </interactant>
    <interactant intactId="EBI-719493">
        <id>P14373</id>
        <label>TRIM27</label>
    </interactant>
    <organismsDiffer>false</organismsDiffer>
    <experiments>3</experiments>
</comment>
<comment type="interaction">
    <interactant intactId="EBI-7950783">
        <id>Q96JP2</id>
    </interactant>
    <interactant intactId="EBI-2130429">
        <id>Q9BYV2</id>
        <label>TRIM54</label>
    </interactant>
    <organismsDiffer>false</organismsDiffer>
    <experiments>3</experiments>
</comment>
<comment type="interaction">
    <interactant intactId="EBI-7950783">
        <id>Q96JP2</id>
    </interactant>
    <interactant intactId="EBI-739485">
        <id>Q9Y3Q8</id>
        <label>TSC22D4</label>
    </interactant>
    <organismsDiffer>false</organismsDiffer>
    <experiments>3</experiments>
</comment>
<comment type="interaction">
    <interactant intactId="EBI-7950783">
        <id>Q96JP2</id>
    </interactant>
    <interactant intactId="EBI-947187">
        <id>Q9UHD9</id>
        <label>UBQLN2</label>
    </interactant>
    <organismsDiffer>false</organismsDiffer>
    <experiments>3</experiments>
</comment>
<comment type="interaction">
    <interactant intactId="EBI-7950783">
        <id>Q96JP2</id>
    </interactant>
    <interactant intactId="EBI-11957216">
        <id>A8MV65-2</id>
        <label>VGLL3</label>
    </interactant>
    <organismsDiffer>false</organismsDiffer>
    <experiments>3</experiments>
</comment>
<comment type="interaction">
    <interactant intactId="EBI-7950783">
        <id>Q96JP2</id>
    </interactant>
    <interactant intactId="EBI-740037">
        <id>O96006</id>
        <label>ZBED1</label>
    </interactant>
    <organismsDiffer>false</organismsDiffer>
    <experiments>3</experiments>
</comment>
<comment type="interaction">
    <interactant intactId="EBI-7950783">
        <id>Q96JP2</id>
    </interactant>
    <interactant intactId="EBI-12017160">
        <id>Q96DT7-3</id>
        <label>ZBTB10</label>
    </interactant>
    <organismsDiffer>false</organismsDiffer>
    <experiments>3</experiments>
</comment>
<comment type="interaction">
    <interactant intactId="EBI-7950783">
        <id>Q96JP2</id>
    </interactant>
    <interactant intactId="EBI-7229473">
        <id>Q9H5J0</id>
        <label>ZBTB3</label>
    </interactant>
    <organismsDiffer>false</organismsDiffer>
    <experiments>3</experiments>
</comment>
<comment type="interaction">
    <interactant intactId="EBI-7950783">
        <id>Q96JP2</id>
    </interactant>
    <interactant intactId="EBI-10188476">
        <id>A0A0C4DGF1</id>
        <label>ZBTB32</label>
    </interactant>
    <organismsDiffer>false</organismsDiffer>
    <experiments>3</experiments>
</comment>
<comment type="interaction">
    <interactant intactId="EBI-7950783">
        <id>Q96JP2</id>
    </interactant>
    <interactant intactId="EBI-742740">
        <id>Q96BR9</id>
        <label>ZBTB8A</label>
    </interactant>
    <organismsDiffer>false</organismsDiffer>
    <experiments>3</experiments>
</comment>
<comment type="interaction">
    <interactant intactId="EBI-7950783">
        <id>Q96JP2</id>
    </interactant>
    <interactant intactId="EBI-3937908">
        <id>Q8WYQ9</id>
        <label>ZCCHC14</label>
    </interactant>
    <organismsDiffer>false</organismsDiffer>
    <experiments>3</experiments>
</comment>
<comment type="interaction">
    <interactant intactId="EBI-7950783">
        <id>Q96JP2</id>
    </interactant>
    <interactant intactId="EBI-10265237">
        <id>Q8NC26</id>
        <label>ZNF114</label>
    </interactant>
    <organismsDiffer>false</organismsDiffer>
    <experiments>3</experiments>
</comment>
<comment type="interaction">
    <interactant intactId="EBI-7950783">
        <id>Q96JP2</id>
    </interactant>
    <interactant intactId="EBI-11962468">
        <id>Q7Z4V0</id>
        <label>ZNF438</label>
    </interactant>
    <organismsDiffer>false</organismsDiffer>
    <experiments>3</experiments>
</comment>
<comment type="interaction">
    <interactant intactId="EBI-7950783">
        <id>Q96JP2</id>
    </interactant>
    <interactant intactId="EBI-10251462">
        <id>Q6NX45</id>
        <label>ZNF774</label>
    </interactant>
    <organismsDiffer>false</organismsDiffer>
    <experiments>3</experiments>
</comment>
<comment type="interaction">
    <interactant intactId="EBI-7950783">
        <id>Q96JP2</id>
    </interactant>
    <interactant intactId="EBI-11962574">
        <id>Q96EG3</id>
        <label>ZNF837</label>
    </interactant>
    <organismsDiffer>false</organismsDiffer>
    <experiments>3</experiments>
</comment>
<comment type="subcellular location">
    <subcellularLocation>
        <location evidence="7">Cytoplasm</location>
    </subcellularLocation>
</comment>
<comment type="alternative products">
    <event type="alternative splicing"/>
    <isoform>
        <id>Q96JP2-1</id>
        <name>1</name>
        <sequence type="displayed"/>
    </isoform>
    <isoform>
        <id>Q96JP2-2</id>
        <name>2</name>
        <sequence type="described" ref="VSP_062068 VSP_062069"/>
    </isoform>
</comment>
<comment type="tissue specificity">
    <text>Detected in brain, stomach and kidney.</text>
</comment>
<comment type="miscellaneous">
    <molecule>Isoform 2</molecule>
    <text evidence="7">May be produced at very low levels due to a premature stop codon in the mRNA, leading to nonsense-mediated mRNA decay.</text>
</comment>
<comment type="similarity">
    <text evidence="7">Belongs to the TRAFAC class myosin-kinesin ATPase superfamily. Myosin family.</text>
</comment>
<comment type="caution">
    <text evidence="7">Represents an unconventional myosin. This protein should not be confused with the conventional myosin-15 (MYH15).</text>
</comment>
<comment type="sequence caution" evidence="7">
    <conflict type="miscellaneous discrepancy">
        <sequence resource="EMBL-CDS" id="BAB47412"/>
    </conflict>
    <text>Probable cloning artifact.</text>
</comment>
<accession>Q96JP2</accession>
<accession>A0A0J9YVZ6</accession>
<accession>A0A2R8YFM0</accession>
<name>MY15B_HUMAN</name>
<gene>
    <name evidence="8" type="primary">MYO15B</name>
    <name type="synonym">KIAA1783</name>
    <name type="synonym">MYO15BP</name>
</gene>
<organism>
    <name type="scientific">Homo sapiens</name>
    <name type="common">Human</name>
    <dbReference type="NCBI Taxonomy" id="9606"/>
    <lineage>
        <taxon>Eukaryota</taxon>
        <taxon>Metazoa</taxon>
        <taxon>Chordata</taxon>
        <taxon>Craniata</taxon>
        <taxon>Vertebrata</taxon>
        <taxon>Euteleostomi</taxon>
        <taxon>Mammalia</taxon>
        <taxon>Eutheria</taxon>
        <taxon>Euarchontoglires</taxon>
        <taxon>Primates</taxon>
        <taxon>Haplorrhini</taxon>
        <taxon>Catarrhini</taxon>
        <taxon>Hominidae</taxon>
        <taxon>Homo</taxon>
    </lineage>
</organism>
<sequence>MGRNQRKAPQRLERPGRPASGEQESGSASADGAPSRERRSDRGQADRAKPAAEPATAGGQGTPGGRRKPTAEGNGGCRRPGAGLSPKAQERQSNAQRQGRGPRGGRGGRLEEGSLSGGEELGGRRRRKRKDKGPSARRGRRTPRSLNGDTSGGDGGSSCPDSETREAQESGSQRGTARELRPTPEPTDMGSEGTKTGPESALEPSSDGLDSDWPHADTRGREGSSGTGPLGASEHSGGDSDSSPLGTGPGRGSRAAMASRTFEDSSRAPRDTGPAKDASDNRAQRGAEPETMQASTARAPRHQVGKAVGQVPAAAGEGEAGAAAGAGPEDPAPLAALLVVRRLLARPPPGAASQAVGPRRAGLKERLLSVARALGLLRWLRRRLRLRRRPPEGEGQGTGPRASEGWGRRKPDEGRGHGRGSKGRGRGKADEGRGHERGDEGRGRGKADEGRGHERGYEGRGCGKADEGRGHERGDEGRDHQRGYEGWGREPGLRHRLALRLAGLAGLGGMPRASPGGRSPQVPTSPVPGDPFDQEDETPDPKFAVVFPRIHRAGRASSSRSSEEASADAPTGEGRGWPRAGVGGHSEGCRTSGEGVSGLRRGSLLAPTAPDGPSLDESGSSSEAELETLNDEPPVRWAQGSGPHEGPRLGAAVLLPRLSLETRLQQEGDPGLRGSLRELWEPEDEDEAVLERDLELSLRPGLEAPPFPGAKGRSLGDGLEDMEDLARLRLVCDSSVLLCLKKRFHLGRIYTFGGPVLLVLNPHRSLPLFSPEVQASYHPRKALSTTPHIFAIVASAYDLAQNTGQDPCILLCSSHCSGHSGSGKTEAAKKIMQFLSSLEQDQTGNRECQVEDMLPILSSFGHAKTILNANASRFGQVFCLYLQQGVIVGASVSHYLLETSRVVFQAQAERSFHVFYKLLAGLDSIERERLSLQGPETYYYLNQGQACRLQGKEDAQDFEGLLKALQGLGLCPEELNAVWAVLAAILQLGNICFSSSERESQEVAAVSSWAEIHTAARLLRVPPECLEGAVTRRVTETPYGQVSRSLPVESAFDARDALAKALYSRLFHRLLRRTNARLAPPGEGGSIGTVTVVDAYGFEALRVNGLEQLCNNLASERLQLFSSQMLLAQEEEECRRELLSWVPVPQPPRESCLDLLVDQPHSLLSILDAQTWLSQATDHTFLQKSHYHHGDHPSYAKPRLPLPVFTVRHYAGTVTYQVHKFLNRNRDQLDPAVVEMLGQSQLQLVGSLFQEAEPQSRGGRGRPTLASRFQQALEDLIARLGRSHVYFIQCLTPNPGKLPGLFDVGHVTEQLHQAAILEAVGTRSANFPVRVPFEAFLASFQALGSEGQEDLSDREKCGAVLSQVLGAESPLYHLGATKVLLQEQGWQRLEELRDQQRSQALVDLHRSFHTCISRQRVLPRMQARMRGFQARKRYLRRRAALGQLNTILLVAQPLLQRRQRLQLGRWQGWHSSERALERVPSMELGRLEIPAELAVMLKTAESHRDALAGSITECLPPEVPARPSLTLPADIDLFPFSSFVAIGFQEPSLPRPGQPLAKPLTQLDGDNPQRALDINKVMLRLLGDGSLESWQRQIMGAYLVRQGQCRPGLRNELFSQLVAQLWQNPDEQQSQRGWALMAVLLSAFPPLPVLQKPLLKFVSDQAPRGMAALCQHKLLGALEQSQLASGATRAHPPTQLEWLAGWRRGRMALDVFTFSEECYSAEVESWTTGEQLAGWILQSRGLEAPPRGWSVSLHSRDAWQDLAGCDFVLDLISQTEDLGDPARPRSYPITPLGSAEAIPLAPGIQAPSLPPGPPPGPAPTLPSRDHTGEVQRSGSLDGFLDQIFQPVISSGLSDLEQSWALSSRMKGGGAIGPTQQGYPMVYPGMIQMPAYQPGMVPAPMPMMPAMGTVPAMPAMVVPPQPPLPSLDAGQLAVQQQNFIQQQALILAQQMTAQAMSLSLEQQMQQRQQQARASEAASQASPSAVTSKPRKPPTPPEKPQRDLGSEGGCLRETSEEAEDRPYQPKSFQQKRNYFQRMGQPQITVRTMKPPAKVHIPQGEAQEEEEEEEEEEEQEEQEVETRAVPSPPPPPIVKKPLKQGGAKAPKEAEAEPAKETAAKGHGQGPAQGRGTVVRSSDSKPKRPQPSREIGNIIRMYQSRPGPVPVPVQPSRPPKAFLRKIDPKDEALAKLGINGAHSSPPMLSPSPGKGPPPAVAPRPKAPLQLGPSSSIKEKQGPLLDLFGQKLPIAHTPPPPPAPPLPLPEDPGTLSAERRCLTQPVEDQGVSTQLLAPSGSVCFSYTGTPWKLFLRKEVFYPRENFSHPYYLRLLCEQILRDTFSESCIRISQNERRKMKDLLGGLEVDLDSLTTTEDSVKKRIVVAARDNWANYFSRFFPVSGESGSDVQLLAVSHRGLRLLKVTQGPGLRPDQLKILCSYSFAEVLGVECRGGSTLELSLKSEQLVLHTARARAIEALVELFLNELKKDSGYVIALRSYITDNCSLLSFHRGDLIKLLPVATLEPGWQFGSAGGRSGLFPADIVQPAAAPDFSFSKEQRSGWHKGQLSNGEPGLARWDRASERPAHPWSQAHSDDSEATSLSSVAYAFLPDSHSYTMQEFARRYFRRSQALLGQTDGGAAGKDTDSLVQYTKAPIQESLLSLSDDVSKLAVASFLALMRFMGDQSKPRGKDEMDLLYELLKLCQQEKLRDEIYCQVIKQVTGHPRPEHCTRGWSFLSLLTGFFPPSTRLMPYLTKFLQDSGPSQELARSSQEHLQRTVKYGGRRRMPPPGEMKAFLKGQAIRLLLIHLPGGVDYRTNIQTFTVAAEVQEELCRQMGITEPQEVQEFALFLIKEKSQLVRPLQPAEYLNSVVVDQDVSLHSRRLHWETPLHFDNSTYISTHYSQVLWDYLQGKLPVSAKADAQLARLAALQHLSKANRNTPSGQDLLAYVPKQLQRQVNTASIKNLMGQELRRLEGHSPQEAQISFIEAMSQLPLFGYTVYGVLRVSMQALSGPTLLGLNRQHLILMDPSSQSLYCRIALKSLQRLHLLSPLEEKGPPGLEVNYGSADNPQTIWFELPQAQELLYTTVFLIDSSASCTEWPSIN</sequence>
<dbReference type="EMBL" id="AF418286">
    <property type="status" value="NOT_ANNOTATED_CDS"/>
    <property type="molecule type" value="mRNA"/>
</dbReference>
<dbReference type="EMBL" id="AF418287">
    <property type="status" value="NOT_ANNOTATED_CDS"/>
    <property type="molecule type" value="mRNA"/>
</dbReference>
<dbReference type="EMBL" id="AF418288">
    <property type="status" value="NOT_ANNOTATED_CDS"/>
    <property type="molecule type" value="mRNA"/>
</dbReference>
<dbReference type="EMBL" id="AF418289">
    <property type="status" value="NOT_ANNOTATED_CDS"/>
    <property type="molecule type" value="mRNA"/>
</dbReference>
<dbReference type="EMBL" id="AF418290">
    <property type="status" value="NOT_ANNOTATED_CDS"/>
    <property type="molecule type" value="mRNA"/>
</dbReference>
<dbReference type="EMBL" id="AF418291">
    <property type="status" value="NOT_ANNOTATED_CDS"/>
    <property type="molecule type" value="mRNA"/>
</dbReference>
<dbReference type="EMBL" id="AB058686">
    <property type="protein sequence ID" value="BAB47412.1"/>
    <property type="status" value="ALT_SEQ"/>
    <property type="molecule type" value="mRNA"/>
</dbReference>
<dbReference type="EMBL" id="AC087749">
    <property type="status" value="NOT_ANNOTATED_CDS"/>
    <property type="molecule type" value="Genomic_DNA"/>
</dbReference>
<dbReference type="EMBL" id="KF511237">
    <property type="status" value="NOT_ANNOTATED_CDS"/>
    <property type="molecule type" value="Genomic_DNA"/>
</dbReference>
<dbReference type="RefSeq" id="NP_001296171.1">
    <property type="nucleotide sequence ID" value="NM_001309242.1"/>
</dbReference>
<dbReference type="RefSeq" id="NP_001381987.1">
    <molecule id="Q96JP2-1"/>
    <property type="nucleotide sequence ID" value="NM_001395058.1"/>
</dbReference>
<dbReference type="PDB" id="2DLP">
    <property type="method" value="NMR"/>
    <property type="chains" value="A=2483-2554"/>
</dbReference>
<dbReference type="PDBsum" id="2DLP"/>
<dbReference type="BMRB" id="Q96JP2"/>
<dbReference type="SMR" id="Q96JP2"/>
<dbReference type="FunCoup" id="Q96JP2">
    <property type="interactions" value="1"/>
</dbReference>
<dbReference type="IntAct" id="Q96JP2">
    <property type="interactions" value="84"/>
</dbReference>
<dbReference type="MINT" id="Q96JP2"/>
<dbReference type="STRING" id="9606.ENSP00000495242"/>
<dbReference type="GlyCosmos" id="Q96JP2">
    <property type="glycosylation" value="1 site, 1 glycan"/>
</dbReference>
<dbReference type="GlyGen" id="Q96JP2">
    <property type="glycosylation" value="2 sites"/>
</dbReference>
<dbReference type="iPTMnet" id="Q96JP2"/>
<dbReference type="PhosphoSitePlus" id="Q96JP2"/>
<dbReference type="BioMuta" id="MYO15B"/>
<dbReference type="DMDM" id="150384690"/>
<dbReference type="jPOST" id="Q96JP2"/>
<dbReference type="MassIVE" id="Q96JP2"/>
<dbReference type="PeptideAtlas" id="Q96JP2"/>
<dbReference type="ProteomicsDB" id="76998"/>
<dbReference type="Pumba" id="Q96JP2"/>
<dbReference type="Antibodypedia" id="69409">
    <property type="antibodies" value="2 antibodies from 1 providers"/>
</dbReference>
<dbReference type="Ensembl" id="ENST00000584516.5">
    <molecule id="Q96JP2-2"/>
    <property type="protein sequence ID" value="ENSP00000487864.1"/>
    <property type="gene ID" value="ENSG00000266714.11"/>
</dbReference>
<dbReference type="Ensembl" id="ENST00000619501.4">
    <molecule id="Q96JP2-2"/>
    <property type="protein sequence ID" value="ENSP00000488884.1"/>
    <property type="gene ID" value="ENSG00000266714.11"/>
</dbReference>
<dbReference type="Ensembl" id="ENST00000645453.3">
    <molecule id="Q96JP2-1"/>
    <property type="protein sequence ID" value="ENSP00000495242.3"/>
    <property type="gene ID" value="ENSG00000266714.11"/>
</dbReference>
<dbReference type="GeneID" id="80022"/>
<dbReference type="KEGG" id="hsa:80022"/>
<dbReference type="MANE-Select" id="ENST00000645453.3">
    <property type="protein sequence ID" value="ENSP00000495242.3"/>
    <property type="RefSeq nucleotide sequence ID" value="NM_001395058.1"/>
    <property type="RefSeq protein sequence ID" value="NP_001381987.1"/>
</dbReference>
<dbReference type="AGR" id="HGNC:14083"/>
<dbReference type="CTD" id="80022"/>
<dbReference type="DisGeNET" id="80022"/>
<dbReference type="GeneCards" id="MYO15B"/>
<dbReference type="HGNC" id="HGNC:14083">
    <property type="gene designation" value="MYO15B"/>
</dbReference>
<dbReference type="MIM" id="620915">
    <property type="type" value="gene"/>
</dbReference>
<dbReference type="neXtProt" id="NX_Q96JP2"/>
<dbReference type="OpenTargets" id="ENSG00000266714"/>
<dbReference type="VEuPathDB" id="HostDB:ENSG00000266714"/>
<dbReference type="GeneTree" id="ENSGT00930000151032"/>
<dbReference type="InParanoid" id="Q96JP2"/>
<dbReference type="OrthoDB" id="8182952at2759"/>
<dbReference type="PAN-GO" id="Q96JP2">
    <property type="GO annotations" value="0 GO annotations based on evolutionary models"/>
</dbReference>
<dbReference type="PhylomeDB" id="Q96JP2"/>
<dbReference type="PathwayCommons" id="Q96JP2"/>
<dbReference type="SignaLink" id="Q96JP2"/>
<dbReference type="BioGRID-ORCS" id="80022">
    <property type="hits" value="0 hits in 66 CRISPR screens"/>
</dbReference>
<dbReference type="ChiTaRS" id="MYO15B">
    <property type="organism name" value="human"/>
</dbReference>
<dbReference type="EvolutionaryTrace" id="Q96JP2"/>
<dbReference type="GenomeRNAi" id="80022"/>
<dbReference type="Pharos" id="Q96JP2">
    <property type="development level" value="Tdark"/>
</dbReference>
<dbReference type="PRO" id="PR:Q96JP2"/>
<dbReference type="Proteomes" id="UP000005640">
    <property type="component" value="Chromosome 17"/>
</dbReference>
<dbReference type="RNAct" id="Q96JP2">
    <property type="molecule type" value="protein"/>
</dbReference>
<dbReference type="Bgee" id="ENSG00000266714">
    <property type="expression patterns" value="Expressed in right uterine tube and 151 other cell types or tissues"/>
</dbReference>
<dbReference type="ExpressionAtlas" id="Q96JP2">
    <property type="expression patterns" value="baseline and differential"/>
</dbReference>
<dbReference type="GO" id="GO:0005903">
    <property type="term" value="C:brush border"/>
    <property type="evidence" value="ECO:0007669"/>
    <property type="project" value="Ensembl"/>
</dbReference>
<dbReference type="GO" id="GO:0005737">
    <property type="term" value="C:cytoplasm"/>
    <property type="evidence" value="ECO:0007669"/>
    <property type="project" value="UniProtKB-SubCell"/>
</dbReference>
<dbReference type="GO" id="GO:0016459">
    <property type="term" value="C:myosin complex"/>
    <property type="evidence" value="ECO:0007669"/>
    <property type="project" value="UniProtKB-KW"/>
</dbReference>
<dbReference type="GO" id="GO:0003779">
    <property type="term" value="F:actin binding"/>
    <property type="evidence" value="ECO:0007669"/>
    <property type="project" value="UniProtKB-KW"/>
</dbReference>
<dbReference type="GO" id="GO:0005524">
    <property type="term" value="F:ATP binding"/>
    <property type="evidence" value="ECO:0007669"/>
    <property type="project" value="UniProtKB-KW"/>
</dbReference>
<dbReference type="GO" id="GO:0003774">
    <property type="term" value="F:cytoskeletal motor activity"/>
    <property type="evidence" value="ECO:0007669"/>
    <property type="project" value="InterPro"/>
</dbReference>
<dbReference type="CDD" id="cd14473">
    <property type="entry name" value="FERM_B-lobe"/>
    <property type="match status" value="1"/>
</dbReference>
<dbReference type="CDD" id="cd13201">
    <property type="entry name" value="FERM_C_MyoXV"/>
    <property type="match status" value="1"/>
</dbReference>
<dbReference type="CDD" id="cd14896">
    <property type="entry name" value="MYSc_Myo35"/>
    <property type="match status" value="1"/>
</dbReference>
<dbReference type="CDD" id="cd12068">
    <property type="entry name" value="SH3_MYO15B"/>
    <property type="match status" value="1"/>
</dbReference>
<dbReference type="FunFam" id="1.10.10.820:FF:000001">
    <property type="entry name" value="Myosin heavy chain"/>
    <property type="match status" value="1"/>
</dbReference>
<dbReference type="Gene3D" id="1.10.10.820">
    <property type="match status" value="1"/>
</dbReference>
<dbReference type="Gene3D" id="1.20.5.4820">
    <property type="match status" value="1"/>
</dbReference>
<dbReference type="Gene3D" id="1.20.58.530">
    <property type="match status" value="1"/>
</dbReference>
<dbReference type="Gene3D" id="1.20.80.10">
    <property type="match status" value="1"/>
</dbReference>
<dbReference type="Gene3D" id="3.40.850.10">
    <property type="entry name" value="Kinesin motor domain"/>
    <property type="match status" value="1"/>
</dbReference>
<dbReference type="Gene3D" id="1.20.120.720">
    <property type="entry name" value="Myosin VI head, motor domain, U50 subdomain"/>
    <property type="match status" value="1"/>
</dbReference>
<dbReference type="Gene3D" id="1.25.40.530">
    <property type="entry name" value="MyTH4 domain"/>
    <property type="match status" value="3"/>
</dbReference>
<dbReference type="Gene3D" id="2.30.29.30">
    <property type="entry name" value="Pleckstrin-homology domain (PH domain)/Phosphotyrosine-binding domain (PTB)"/>
    <property type="match status" value="1"/>
</dbReference>
<dbReference type="Gene3D" id="2.30.30.40">
    <property type="entry name" value="SH3 Domains"/>
    <property type="match status" value="1"/>
</dbReference>
<dbReference type="InterPro" id="IPR019749">
    <property type="entry name" value="Band_41_domain"/>
</dbReference>
<dbReference type="InterPro" id="IPR014352">
    <property type="entry name" value="FERM/acyl-CoA-bd_prot_sf"/>
</dbReference>
<dbReference type="InterPro" id="IPR035963">
    <property type="entry name" value="FERM_2"/>
</dbReference>
<dbReference type="InterPro" id="IPR019748">
    <property type="entry name" value="FERM_central"/>
</dbReference>
<dbReference type="InterPro" id="IPR000299">
    <property type="entry name" value="FERM_domain"/>
</dbReference>
<dbReference type="InterPro" id="IPR036961">
    <property type="entry name" value="Kinesin_motor_dom_sf"/>
</dbReference>
<dbReference type="InterPro" id="IPR035489">
    <property type="entry name" value="MYO15B_SH3"/>
</dbReference>
<dbReference type="InterPro" id="IPR001609">
    <property type="entry name" value="Myosin_head_motor_dom-like"/>
</dbReference>
<dbReference type="InterPro" id="IPR041795">
    <property type="entry name" value="MyoXV_FERM_C"/>
</dbReference>
<dbReference type="InterPro" id="IPR000857">
    <property type="entry name" value="MyTH4_dom"/>
</dbReference>
<dbReference type="InterPro" id="IPR038185">
    <property type="entry name" value="MyTH4_dom_sf"/>
</dbReference>
<dbReference type="InterPro" id="IPR027417">
    <property type="entry name" value="P-loop_NTPase"/>
</dbReference>
<dbReference type="InterPro" id="IPR011993">
    <property type="entry name" value="PH-like_dom_sf"/>
</dbReference>
<dbReference type="InterPro" id="IPR036028">
    <property type="entry name" value="SH3-like_dom_sf"/>
</dbReference>
<dbReference type="InterPro" id="IPR001452">
    <property type="entry name" value="SH3_domain"/>
</dbReference>
<dbReference type="InterPro" id="IPR051567">
    <property type="entry name" value="Unconventional_Myosin_ATPase"/>
</dbReference>
<dbReference type="PANTHER" id="PTHR22692">
    <property type="entry name" value="MYOSIN VII, XV"/>
    <property type="match status" value="1"/>
</dbReference>
<dbReference type="PANTHER" id="PTHR22692:SF16">
    <property type="entry name" value="MYOSIN XVB"/>
    <property type="match status" value="1"/>
</dbReference>
<dbReference type="Pfam" id="PF00373">
    <property type="entry name" value="FERM_M"/>
    <property type="match status" value="1"/>
</dbReference>
<dbReference type="Pfam" id="PF00063">
    <property type="entry name" value="Myosin_head"/>
    <property type="match status" value="1"/>
</dbReference>
<dbReference type="Pfam" id="PF00784">
    <property type="entry name" value="MyTH4"/>
    <property type="match status" value="2"/>
</dbReference>
<dbReference type="Pfam" id="PF07653">
    <property type="entry name" value="SH3_2"/>
    <property type="match status" value="1"/>
</dbReference>
<dbReference type="PRINTS" id="PR00193">
    <property type="entry name" value="MYOSINHEAVY"/>
</dbReference>
<dbReference type="SMART" id="SM00295">
    <property type="entry name" value="B41"/>
    <property type="match status" value="1"/>
</dbReference>
<dbReference type="SMART" id="SM00242">
    <property type="entry name" value="MYSc"/>
    <property type="match status" value="1"/>
</dbReference>
<dbReference type="SMART" id="SM00139">
    <property type="entry name" value="MyTH4"/>
    <property type="match status" value="2"/>
</dbReference>
<dbReference type="SMART" id="SM00326">
    <property type="entry name" value="SH3"/>
    <property type="match status" value="1"/>
</dbReference>
<dbReference type="SUPFAM" id="SSF52540">
    <property type="entry name" value="P-loop containing nucleoside triphosphate hydrolases"/>
    <property type="match status" value="1"/>
</dbReference>
<dbReference type="SUPFAM" id="SSF47031">
    <property type="entry name" value="Second domain of FERM"/>
    <property type="match status" value="1"/>
</dbReference>
<dbReference type="SUPFAM" id="SSF50044">
    <property type="entry name" value="SH3-domain"/>
    <property type="match status" value="1"/>
</dbReference>
<dbReference type="PROSITE" id="PS00152">
    <property type="entry name" value="ATPASE_ALPHA_BETA"/>
    <property type="match status" value="1"/>
</dbReference>
<dbReference type="PROSITE" id="PS50057">
    <property type="entry name" value="FERM_3"/>
    <property type="match status" value="1"/>
</dbReference>
<dbReference type="PROSITE" id="PS50096">
    <property type="entry name" value="IQ"/>
    <property type="match status" value="1"/>
</dbReference>
<dbReference type="PROSITE" id="PS51456">
    <property type="entry name" value="MYOSIN_MOTOR"/>
    <property type="match status" value="1"/>
</dbReference>
<dbReference type="PROSITE" id="PS51016">
    <property type="entry name" value="MYTH4"/>
    <property type="match status" value="2"/>
</dbReference>
<dbReference type="PROSITE" id="PS50002">
    <property type="entry name" value="SH3"/>
    <property type="match status" value="1"/>
</dbReference>
<proteinExistence type="evidence at protein level"/>
<evidence type="ECO:0000255" key="1">
    <source>
        <dbReference type="PROSITE-ProRule" id="PRU00084"/>
    </source>
</evidence>
<evidence type="ECO:0000255" key="2">
    <source>
        <dbReference type="PROSITE-ProRule" id="PRU00116"/>
    </source>
</evidence>
<evidence type="ECO:0000255" key="3">
    <source>
        <dbReference type="PROSITE-ProRule" id="PRU00192"/>
    </source>
</evidence>
<evidence type="ECO:0000255" key="4">
    <source>
        <dbReference type="PROSITE-ProRule" id="PRU00359"/>
    </source>
</evidence>
<evidence type="ECO:0000255" key="5">
    <source>
        <dbReference type="PROSITE-ProRule" id="PRU00782"/>
    </source>
</evidence>
<evidence type="ECO:0000256" key="6">
    <source>
        <dbReference type="SAM" id="MobiDB-lite"/>
    </source>
</evidence>
<evidence type="ECO:0000305" key="7"/>
<evidence type="ECO:0000312" key="8">
    <source>
        <dbReference type="HGNC" id="HGNC:14083"/>
    </source>
</evidence>
<evidence type="ECO:0007829" key="9">
    <source>
        <dbReference type="PDB" id="2DLP"/>
    </source>
</evidence>